<feature type="chain" id="PRO_0000162544" description="Arsenate reductase">
    <location>
        <begin position="1"/>
        <end position="141"/>
    </location>
</feature>
<feature type="region of interest" description="Disordered" evidence="3">
    <location>
        <begin position="122"/>
        <end position="141"/>
    </location>
</feature>
<feature type="compositionally biased region" description="Basic and acidic residues" evidence="3">
    <location>
        <begin position="125"/>
        <end position="141"/>
    </location>
</feature>
<feature type="active site" description="Nucleophile; cysteine thioarsenate intermediate" evidence="1 2">
    <location>
        <position position="12"/>
    </location>
</feature>
<feature type="site" description="Important for activity" evidence="1">
    <location>
        <position position="8"/>
    </location>
</feature>
<feature type="site" description="Important for activity" evidence="1">
    <location>
        <position position="60"/>
    </location>
</feature>
<feature type="site" description="Important for activity" evidence="1">
    <location>
        <position position="94"/>
    </location>
</feature>
<feature type="site" description="Important for activity" evidence="1">
    <location>
        <position position="107"/>
    </location>
</feature>
<proteinExistence type="inferred from homology"/>
<name>ARSC_YEREN</name>
<accession>P74984</accession>
<evidence type="ECO:0000250" key="1">
    <source>
        <dbReference type="UniProtKB" id="P08692"/>
    </source>
</evidence>
<evidence type="ECO:0000255" key="2">
    <source>
        <dbReference type="PROSITE-ProRule" id="PRU01282"/>
    </source>
</evidence>
<evidence type="ECO:0000256" key="3">
    <source>
        <dbReference type="SAM" id="MobiDB-lite"/>
    </source>
</evidence>
<evidence type="ECO:0000305" key="4"/>
<sequence>MSNITIYHNPTCGTSRNTLEMIRNSGNEPTVIYYLETPPTHDELVKLIADMGITVRALLRKNVEPYEELGLAEGTFSDEQLIGFMLEHPILINRPIVVTPLGTRLCRPSEVVLDILPEPQQGAFTKEDGEKITDESGKRLK</sequence>
<reference key="1">
    <citation type="journal article" date="1997" name="J. Bacteriol.">
        <title>Virulence and arsenic resistance in Yersiniae.</title>
        <authorList>
            <person name="Neyt C."/>
            <person name="Iriarte M."/>
            <person name="Thi V.H."/>
            <person name="Cornelis G.R."/>
        </authorList>
    </citation>
    <scope>NUCLEOTIDE SEQUENCE [GENOMIC DNA]</scope>
    <source>
        <strain>439-80 / Serotype O:9</strain>
        <plasmid>pYV</plasmid>
        <transposon>Tn2502</transposon>
    </source>
</reference>
<reference key="2">
    <citation type="submission" date="1998-10" db="EMBL/GenBank/DDBJ databases">
        <title>Detailed genetic map of the pYVe227 plasmid of Yersinia enterocolitica serotype O:9.</title>
        <authorList>
            <person name="Iriarte M."/>
            <person name="Lambermont I."/>
            <person name="Kerbourch C."/>
            <person name="Cornelis G.R."/>
        </authorList>
    </citation>
    <scope>NUCLEOTIDE SEQUENCE [GENOMIC DNA]</scope>
    <source>
        <strain>W22703 / Serotype O:9 / Biotype 2</strain>
        <plasmid>pYVe227</plasmid>
    </source>
</reference>
<organism>
    <name type="scientific">Yersinia enterocolitica</name>
    <dbReference type="NCBI Taxonomy" id="630"/>
    <lineage>
        <taxon>Bacteria</taxon>
        <taxon>Pseudomonadati</taxon>
        <taxon>Pseudomonadota</taxon>
        <taxon>Gammaproteobacteria</taxon>
        <taxon>Enterobacterales</taxon>
        <taxon>Yersiniaceae</taxon>
        <taxon>Yersinia</taxon>
    </lineage>
</organism>
<dbReference type="EC" id="1.20.4.1" evidence="1"/>
<dbReference type="EMBL" id="U58366">
    <property type="protein sequence ID" value="AAB42203.1"/>
    <property type="molecule type" value="Genomic_DNA"/>
</dbReference>
<dbReference type="EMBL" id="AF102990">
    <property type="protein sequence ID" value="AAD16858.1"/>
    <property type="molecule type" value="Genomic_DNA"/>
</dbReference>
<dbReference type="RefSeq" id="NP_052438.1">
    <property type="nucleotide sequence ID" value="NC_002120.1"/>
</dbReference>
<dbReference type="RefSeq" id="WP_010891244.1">
    <property type="nucleotide sequence ID" value="NZ_KN150737.1"/>
</dbReference>
<dbReference type="SMR" id="P74984"/>
<dbReference type="STRING" id="1443113.LC20_00725"/>
<dbReference type="KEGG" id="yet:CH48_4165"/>
<dbReference type="GO" id="GO:0008794">
    <property type="term" value="F:arsenate reductase (glutaredoxin) activity"/>
    <property type="evidence" value="ECO:0007669"/>
    <property type="project" value="UniProtKB-EC"/>
</dbReference>
<dbReference type="GO" id="GO:0046685">
    <property type="term" value="P:response to arsenic-containing substance"/>
    <property type="evidence" value="ECO:0007669"/>
    <property type="project" value="UniProtKB-KW"/>
</dbReference>
<dbReference type="CDD" id="cd03034">
    <property type="entry name" value="ArsC_ArsC"/>
    <property type="match status" value="1"/>
</dbReference>
<dbReference type="Gene3D" id="3.40.30.10">
    <property type="entry name" value="Glutaredoxin"/>
    <property type="match status" value="1"/>
</dbReference>
<dbReference type="InterPro" id="IPR006659">
    <property type="entry name" value="Arsenate_reductase"/>
</dbReference>
<dbReference type="InterPro" id="IPR006660">
    <property type="entry name" value="Arsenate_reductase-like"/>
</dbReference>
<dbReference type="InterPro" id="IPR036249">
    <property type="entry name" value="Thioredoxin-like_sf"/>
</dbReference>
<dbReference type="NCBIfam" id="TIGR00014">
    <property type="entry name" value="arsC"/>
    <property type="match status" value="1"/>
</dbReference>
<dbReference type="NCBIfam" id="NF007456">
    <property type="entry name" value="PRK10026.1"/>
    <property type="match status" value="1"/>
</dbReference>
<dbReference type="PANTHER" id="PTHR30041">
    <property type="entry name" value="ARSENATE REDUCTASE"/>
    <property type="match status" value="1"/>
</dbReference>
<dbReference type="PANTHER" id="PTHR30041:SF5">
    <property type="entry name" value="ARSENATE REDUCTASE-RELATED"/>
    <property type="match status" value="1"/>
</dbReference>
<dbReference type="Pfam" id="PF03960">
    <property type="entry name" value="ArsC"/>
    <property type="match status" value="1"/>
</dbReference>
<dbReference type="SUPFAM" id="SSF52833">
    <property type="entry name" value="Thioredoxin-like"/>
    <property type="match status" value="1"/>
</dbReference>
<dbReference type="PROSITE" id="PS51353">
    <property type="entry name" value="ARSC"/>
    <property type="match status" value="1"/>
</dbReference>
<geneLocation type="plasmid">
    <name>pYV</name>
</geneLocation>
<geneLocation type="plasmid">
    <name>pYVe227</name>
</geneLocation>
<protein>
    <recommendedName>
        <fullName>Arsenate reductase</fullName>
        <ecNumber evidence="1">1.20.4.1</ecNumber>
    </recommendedName>
    <alternativeName>
        <fullName>Arsenical pump modifier</fullName>
    </alternativeName>
</protein>
<gene>
    <name type="primary">arsC</name>
</gene>
<comment type="function">
    <text evidence="1">Involved in resistance to arsenate. Catalyzes the reduction of arsenate [As(V)] to arsenite [As(III)].</text>
</comment>
<comment type="catalytic activity">
    <reaction evidence="1">
        <text>[glutaredoxin]-dithiol + arsenate + glutathione + H(+) = glutathionyl-S-S-[glutaredoxin] + arsenite + H2O</text>
        <dbReference type="Rhea" id="RHEA:22016"/>
        <dbReference type="Rhea" id="RHEA-COMP:10729"/>
        <dbReference type="Rhea" id="RHEA-COMP:17668"/>
        <dbReference type="ChEBI" id="CHEBI:15377"/>
        <dbReference type="ChEBI" id="CHEBI:15378"/>
        <dbReference type="ChEBI" id="CHEBI:29242"/>
        <dbReference type="ChEBI" id="CHEBI:29950"/>
        <dbReference type="ChEBI" id="CHEBI:48597"/>
        <dbReference type="ChEBI" id="CHEBI:57925"/>
        <dbReference type="ChEBI" id="CHEBI:146199"/>
        <dbReference type="EC" id="1.20.4.1"/>
    </reaction>
</comment>
<comment type="similarity">
    <text evidence="4">Belongs to the ArsC family.</text>
</comment>
<keyword id="KW-0059">Arsenical resistance</keyword>
<keyword id="KW-0560">Oxidoreductase</keyword>
<keyword id="KW-0614">Plasmid</keyword>
<keyword id="KW-0814">Transposable element</keyword>